<gene>
    <name evidence="1" type="primary">kdsA</name>
    <name type="ordered locus">HPSH_00015</name>
</gene>
<dbReference type="EC" id="2.5.1.55" evidence="1"/>
<dbReference type="EMBL" id="CP001072">
    <property type="protein sequence ID" value="ACD47472.1"/>
    <property type="molecule type" value="Genomic_DNA"/>
</dbReference>
<dbReference type="RefSeq" id="WP_000858158.1">
    <property type="nucleotide sequence ID" value="NC_010698.2"/>
</dbReference>
<dbReference type="SMR" id="B2UW07"/>
<dbReference type="KEGG" id="hps:HPSH_00015"/>
<dbReference type="HOGENOM" id="CLU_036666_0_0_7"/>
<dbReference type="UniPathway" id="UPA00030"/>
<dbReference type="UniPathway" id="UPA00357">
    <property type="reaction ID" value="UER00474"/>
</dbReference>
<dbReference type="GO" id="GO:0005737">
    <property type="term" value="C:cytoplasm"/>
    <property type="evidence" value="ECO:0007669"/>
    <property type="project" value="UniProtKB-SubCell"/>
</dbReference>
<dbReference type="GO" id="GO:0008676">
    <property type="term" value="F:3-deoxy-8-phosphooctulonate synthase activity"/>
    <property type="evidence" value="ECO:0007669"/>
    <property type="project" value="UniProtKB-UniRule"/>
</dbReference>
<dbReference type="GO" id="GO:0019294">
    <property type="term" value="P:keto-3-deoxy-D-manno-octulosonic acid biosynthetic process"/>
    <property type="evidence" value="ECO:0007669"/>
    <property type="project" value="UniProtKB-UniRule"/>
</dbReference>
<dbReference type="Gene3D" id="3.20.20.70">
    <property type="entry name" value="Aldolase class I"/>
    <property type="match status" value="1"/>
</dbReference>
<dbReference type="HAMAP" id="MF_00056">
    <property type="entry name" value="KDO8P_synth"/>
    <property type="match status" value="1"/>
</dbReference>
<dbReference type="InterPro" id="IPR013785">
    <property type="entry name" value="Aldolase_TIM"/>
</dbReference>
<dbReference type="InterPro" id="IPR006218">
    <property type="entry name" value="DAHP1/KDSA"/>
</dbReference>
<dbReference type="InterPro" id="IPR006269">
    <property type="entry name" value="KDO8P_synthase"/>
</dbReference>
<dbReference type="NCBIfam" id="TIGR01362">
    <property type="entry name" value="KDO8P_synth"/>
    <property type="match status" value="1"/>
</dbReference>
<dbReference type="NCBIfam" id="NF003543">
    <property type="entry name" value="PRK05198.1"/>
    <property type="match status" value="1"/>
</dbReference>
<dbReference type="PANTHER" id="PTHR21057">
    <property type="entry name" value="PHOSPHO-2-DEHYDRO-3-DEOXYHEPTONATE ALDOLASE"/>
    <property type="match status" value="1"/>
</dbReference>
<dbReference type="Pfam" id="PF00793">
    <property type="entry name" value="DAHP_synth_1"/>
    <property type="match status" value="1"/>
</dbReference>
<dbReference type="SUPFAM" id="SSF51569">
    <property type="entry name" value="Aldolase"/>
    <property type="match status" value="1"/>
</dbReference>
<protein>
    <recommendedName>
        <fullName evidence="1">2-dehydro-3-deoxyphosphooctonate aldolase</fullName>
        <ecNumber evidence="1">2.5.1.55</ecNumber>
    </recommendedName>
    <alternativeName>
        <fullName evidence="1">3-deoxy-D-manno-octulosonic acid 8-phosphate synthase</fullName>
    </alternativeName>
    <alternativeName>
        <fullName evidence="1">KDO-8-phosphate synthase</fullName>
        <shortName evidence="1">KDO 8-P synthase</shortName>
        <shortName evidence="1">KDOPS</shortName>
    </alternativeName>
    <alternativeName>
        <fullName evidence="1">Phospho-2-dehydro-3-deoxyoctonate aldolase</fullName>
    </alternativeName>
</protein>
<organism>
    <name type="scientific">Helicobacter pylori (strain Shi470)</name>
    <dbReference type="NCBI Taxonomy" id="512562"/>
    <lineage>
        <taxon>Bacteria</taxon>
        <taxon>Pseudomonadati</taxon>
        <taxon>Campylobacterota</taxon>
        <taxon>Epsilonproteobacteria</taxon>
        <taxon>Campylobacterales</taxon>
        <taxon>Helicobacteraceae</taxon>
        <taxon>Helicobacter</taxon>
    </lineage>
</organism>
<feature type="chain" id="PRO_1000091820" description="2-dehydro-3-deoxyphosphooctonate aldolase">
    <location>
        <begin position="1"/>
        <end position="276"/>
    </location>
</feature>
<sequence length="276" mass="30196">MKTSKTKTPKSVLIAGPCVIESLENLRSIAIKLQPLANNERLDFYFKASFDKANRTSLESYRGPGLGKGLEMLQTIKDEFGYKILTDVHESYQASAAAKVADILQIPAFLCRQTDLIVEVSQTNAIINIKKGQFMNPKDMQYSVLKALKTRDSSIQSPTYETALKNGVWLCERGSSFGYGNLVVDMRSLKIMREFAPVIFDATHSVQMPGGANGKSSGDSSFAPILARAAAAVGIDGLFAETHVDPKNALSDGANMLKPDELEHLVADMLKIQNLF</sequence>
<comment type="catalytic activity">
    <reaction evidence="1">
        <text>D-arabinose 5-phosphate + phosphoenolpyruvate + H2O = 3-deoxy-alpha-D-manno-2-octulosonate-8-phosphate + phosphate</text>
        <dbReference type="Rhea" id="RHEA:14053"/>
        <dbReference type="ChEBI" id="CHEBI:15377"/>
        <dbReference type="ChEBI" id="CHEBI:43474"/>
        <dbReference type="ChEBI" id="CHEBI:57693"/>
        <dbReference type="ChEBI" id="CHEBI:58702"/>
        <dbReference type="ChEBI" id="CHEBI:85985"/>
        <dbReference type="EC" id="2.5.1.55"/>
    </reaction>
</comment>
<comment type="pathway">
    <text evidence="1">Carbohydrate biosynthesis; 3-deoxy-D-manno-octulosonate biosynthesis; 3-deoxy-D-manno-octulosonate from D-ribulose 5-phosphate: step 2/3.</text>
</comment>
<comment type="pathway">
    <text evidence="1">Bacterial outer membrane biogenesis; lipopolysaccharide biosynthesis.</text>
</comment>
<comment type="subcellular location">
    <subcellularLocation>
        <location evidence="1">Cytoplasm</location>
    </subcellularLocation>
</comment>
<comment type="similarity">
    <text evidence="1">Belongs to the KdsA family.</text>
</comment>
<accession>B2UW07</accession>
<keyword id="KW-0963">Cytoplasm</keyword>
<keyword id="KW-0448">Lipopolysaccharide biosynthesis</keyword>
<keyword id="KW-0808">Transferase</keyword>
<reference key="1">
    <citation type="submission" date="2008-05" db="EMBL/GenBank/DDBJ databases">
        <title>Genome sequence of Helicobacter pylori from the remote Amazon: traces of Asian ancestry of the first Americans.</title>
        <authorList>
            <person name="Kersulyte D."/>
            <person name="Kalia A."/>
            <person name="Gilman R.H."/>
            <person name="Berg D.E."/>
        </authorList>
    </citation>
    <scope>NUCLEOTIDE SEQUENCE [LARGE SCALE GENOMIC DNA]</scope>
    <source>
        <strain>Shi470</strain>
    </source>
</reference>
<name>KDSA_HELPS</name>
<proteinExistence type="inferred from homology"/>
<evidence type="ECO:0000255" key="1">
    <source>
        <dbReference type="HAMAP-Rule" id="MF_00056"/>
    </source>
</evidence>